<protein>
    <recommendedName>
        <fullName evidence="1">Large ribosomal subunit protein uL2</fullName>
    </recommendedName>
    <alternativeName>
        <fullName evidence="3">50S ribosomal protein L2</fullName>
    </alternativeName>
</protein>
<proteinExistence type="inferred from homology"/>
<organism>
    <name type="scientific">Thermotoga sp. (strain RQ2)</name>
    <dbReference type="NCBI Taxonomy" id="126740"/>
    <lineage>
        <taxon>Bacteria</taxon>
        <taxon>Thermotogati</taxon>
        <taxon>Thermotogota</taxon>
        <taxon>Thermotogae</taxon>
        <taxon>Thermotogales</taxon>
        <taxon>Thermotogaceae</taxon>
        <taxon>Thermotoga</taxon>
    </lineage>
</organism>
<evidence type="ECO:0000255" key="1">
    <source>
        <dbReference type="HAMAP-Rule" id="MF_01320"/>
    </source>
</evidence>
<evidence type="ECO:0000256" key="2">
    <source>
        <dbReference type="SAM" id="MobiDB-lite"/>
    </source>
</evidence>
<evidence type="ECO:0000305" key="3"/>
<name>RL2_THESQ</name>
<dbReference type="EMBL" id="CP000969">
    <property type="protein sequence ID" value="ACB09735.1"/>
    <property type="molecule type" value="Genomic_DNA"/>
</dbReference>
<dbReference type="RefSeq" id="WP_008194995.1">
    <property type="nucleotide sequence ID" value="NC_010483.1"/>
</dbReference>
<dbReference type="SMR" id="B1LBN7"/>
<dbReference type="KEGG" id="trq:TRQ2_1391"/>
<dbReference type="HOGENOM" id="CLU_036235_2_1_0"/>
<dbReference type="Proteomes" id="UP000001687">
    <property type="component" value="Chromosome"/>
</dbReference>
<dbReference type="GO" id="GO:0015934">
    <property type="term" value="C:large ribosomal subunit"/>
    <property type="evidence" value="ECO:0007669"/>
    <property type="project" value="InterPro"/>
</dbReference>
<dbReference type="GO" id="GO:0019843">
    <property type="term" value="F:rRNA binding"/>
    <property type="evidence" value="ECO:0007669"/>
    <property type="project" value="UniProtKB-UniRule"/>
</dbReference>
<dbReference type="GO" id="GO:0003735">
    <property type="term" value="F:structural constituent of ribosome"/>
    <property type="evidence" value="ECO:0007669"/>
    <property type="project" value="InterPro"/>
</dbReference>
<dbReference type="GO" id="GO:0016740">
    <property type="term" value="F:transferase activity"/>
    <property type="evidence" value="ECO:0007669"/>
    <property type="project" value="InterPro"/>
</dbReference>
<dbReference type="GO" id="GO:0002181">
    <property type="term" value="P:cytoplasmic translation"/>
    <property type="evidence" value="ECO:0007669"/>
    <property type="project" value="TreeGrafter"/>
</dbReference>
<dbReference type="FunFam" id="2.30.30.30:FF:000001">
    <property type="entry name" value="50S ribosomal protein L2"/>
    <property type="match status" value="1"/>
</dbReference>
<dbReference type="FunFam" id="2.40.50.140:FF:000003">
    <property type="entry name" value="50S ribosomal protein L2"/>
    <property type="match status" value="1"/>
</dbReference>
<dbReference type="FunFam" id="4.10.950.10:FF:000001">
    <property type="entry name" value="50S ribosomal protein L2"/>
    <property type="match status" value="1"/>
</dbReference>
<dbReference type="Gene3D" id="2.30.30.30">
    <property type="match status" value="1"/>
</dbReference>
<dbReference type="Gene3D" id="2.40.50.140">
    <property type="entry name" value="Nucleic acid-binding proteins"/>
    <property type="match status" value="1"/>
</dbReference>
<dbReference type="Gene3D" id="4.10.950.10">
    <property type="entry name" value="Ribosomal protein L2, domain 3"/>
    <property type="match status" value="1"/>
</dbReference>
<dbReference type="HAMAP" id="MF_01320_B">
    <property type="entry name" value="Ribosomal_uL2_B"/>
    <property type="match status" value="1"/>
</dbReference>
<dbReference type="InterPro" id="IPR012340">
    <property type="entry name" value="NA-bd_OB-fold"/>
</dbReference>
<dbReference type="InterPro" id="IPR014722">
    <property type="entry name" value="Rib_uL2_dom2"/>
</dbReference>
<dbReference type="InterPro" id="IPR002171">
    <property type="entry name" value="Ribosomal_uL2"/>
</dbReference>
<dbReference type="InterPro" id="IPR005880">
    <property type="entry name" value="Ribosomal_uL2_bac/org-type"/>
</dbReference>
<dbReference type="InterPro" id="IPR022669">
    <property type="entry name" value="Ribosomal_uL2_C"/>
</dbReference>
<dbReference type="InterPro" id="IPR022671">
    <property type="entry name" value="Ribosomal_uL2_CS"/>
</dbReference>
<dbReference type="InterPro" id="IPR014726">
    <property type="entry name" value="Ribosomal_uL2_dom3"/>
</dbReference>
<dbReference type="InterPro" id="IPR022666">
    <property type="entry name" value="Ribosomal_uL2_RNA-bd_dom"/>
</dbReference>
<dbReference type="InterPro" id="IPR008991">
    <property type="entry name" value="Translation_prot_SH3-like_sf"/>
</dbReference>
<dbReference type="NCBIfam" id="TIGR01171">
    <property type="entry name" value="rplB_bact"/>
    <property type="match status" value="1"/>
</dbReference>
<dbReference type="PANTHER" id="PTHR13691:SF5">
    <property type="entry name" value="LARGE RIBOSOMAL SUBUNIT PROTEIN UL2M"/>
    <property type="match status" value="1"/>
</dbReference>
<dbReference type="PANTHER" id="PTHR13691">
    <property type="entry name" value="RIBOSOMAL PROTEIN L2"/>
    <property type="match status" value="1"/>
</dbReference>
<dbReference type="Pfam" id="PF00181">
    <property type="entry name" value="Ribosomal_L2"/>
    <property type="match status" value="1"/>
</dbReference>
<dbReference type="Pfam" id="PF03947">
    <property type="entry name" value="Ribosomal_L2_C"/>
    <property type="match status" value="1"/>
</dbReference>
<dbReference type="PIRSF" id="PIRSF002158">
    <property type="entry name" value="Ribosomal_L2"/>
    <property type="match status" value="1"/>
</dbReference>
<dbReference type="SMART" id="SM01383">
    <property type="entry name" value="Ribosomal_L2"/>
    <property type="match status" value="1"/>
</dbReference>
<dbReference type="SMART" id="SM01382">
    <property type="entry name" value="Ribosomal_L2_C"/>
    <property type="match status" value="1"/>
</dbReference>
<dbReference type="SUPFAM" id="SSF50249">
    <property type="entry name" value="Nucleic acid-binding proteins"/>
    <property type="match status" value="1"/>
</dbReference>
<dbReference type="SUPFAM" id="SSF50104">
    <property type="entry name" value="Translation proteins SH3-like domain"/>
    <property type="match status" value="1"/>
</dbReference>
<dbReference type="PROSITE" id="PS00467">
    <property type="entry name" value="RIBOSOMAL_L2"/>
    <property type="match status" value="1"/>
</dbReference>
<sequence>MGLKRFKPVTPGRRFMVISDFSDITKTEPEKSLLAPLKKTGGRNHHGRVTVRHRGGGHKRRYRIIDFKRYDKAGIPAKVLAIEYDPNRSARIALLLYADGEKRYILAPKGVNVGDTLMSGPDAEIRPGNALPLEKIPVGTLVHNVEFTPGKGGQIARAAGTYCQIMAKEGNYALLRMPSGELRKVHIKCYATVGVVGNEDHKNEVHGKAGRVRWLGRRPHVRGVAMNPVDHPHGGGEGRGKGHHPTSPWGLPTKGYKTRRGKRPSDKFIVRRRNEA</sequence>
<gene>
    <name evidence="1" type="primary">rplB</name>
    <name type="ordered locus">TRQ2_1391</name>
</gene>
<feature type="chain" id="PRO_1000141633" description="Large ribosomal subunit protein uL2">
    <location>
        <begin position="1"/>
        <end position="276"/>
    </location>
</feature>
<feature type="region of interest" description="Disordered" evidence="2">
    <location>
        <begin position="223"/>
        <end position="276"/>
    </location>
</feature>
<feature type="compositionally biased region" description="Basic and acidic residues" evidence="2">
    <location>
        <begin position="230"/>
        <end position="240"/>
    </location>
</feature>
<feature type="compositionally biased region" description="Basic and acidic residues" evidence="2">
    <location>
        <begin position="263"/>
        <end position="276"/>
    </location>
</feature>
<keyword id="KW-0687">Ribonucleoprotein</keyword>
<keyword id="KW-0689">Ribosomal protein</keyword>
<keyword id="KW-0694">RNA-binding</keyword>
<keyword id="KW-0699">rRNA-binding</keyword>
<reference key="1">
    <citation type="journal article" date="2011" name="J. Bacteriol.">
        <title>Genome sequence of Thermotoga sp. strain RQ2, a hyperthermophilic bacterium isolated from a geothermally heated region of the seafloor near Ribeira Quente, the Azores.</title>
        <authorList>
            <person name="Swithers K.S."/>
            <person name="DiPippo J.L."/>
            <person name="Bruce D.C."/>
            <person name="Detter C."/>
            <person name="Tapia R."/>
            <person name="Han S."/>
            <person name="Saunders E."/>
            <person name="Goodwin L.A."/>
            <person name="Han J."/>
            <person name="Woyke T."/>
            <person name="Pitluck S."/>
            <person name="Pennacchio L."/>
            <person name="Nolan M."/>
            <person name="Mikhailova N."/>
            <person name="Lykidis A."/>
            <person name="Land M.L."/>
            <person name="Brettin T."/>
            <person name="Stetter K.O."/>
            <person name="Nelson K.E."/>
            <person name="Gogarten J.P."/>
            <person name="Noll K.M."/>
        </authorList>
    </citation>
    <scope>NUCLEOTIDE SEQUENCE [LARGE SCALE GENOMIC DNA]</scope>
    <source>
        <strain>RQ2</strain>
    </source>
</reference>
<accession>B1LBN7</accession>
<comment type="function">
    <text evidence="1">One of the primary rRNA binding proteins. Required for association of the 30S and 50S subunits to form the 70S ribosome, for tRNA binding and peptide bond formation. It has been suggested to have peptidyltransferase activity; this is somewhat controversial. Makes several contacts with the 16S rRNA in the 70S ribosome.</text>
</comment>
<comment type="subunit">
    <text evidence="1">Part of the 50S ribosomal subunit. Forms a bridge to the 30S subunit in the 70S ribosome.</text>
</comment>
<comment type="similarity">
    <text evidence="1">Belongs to the universal ribosomal protein uL2 family.</text>
</comment>